<dbReference type="EC" id="4.3.1.3"/>
<dbReference type="EMBL" id="AE009951">
    <property type="protein sequence ID" value="AAL95599.1"/>
    <property type="molecule type" value="Genomic_DNA"/>
</dbReference>
<dbReference type="RefSeq" id="NP_604300.1">
    <property type="nucleotide sequence ID" value="NC_003454.1"/>
</dbReference>
<dbReference type="RefSeq" id="WP_011017128.1">
    <property type="nucleotide sequence ID" value="NZ_CP028101.1"/>
</dbReference>
<dbReference type="SMR" id="Q8RDU4"/>
<dbReference type="STRING" id="190304.FN1406"/>
<dbReference type="PaxDb" id="190304-FN1406"/>
<dbReference type="EnsemblBacteria" id="AAL95599">
    <property type="protein sequence ID" value="AAL95599"/>
    <property type="gene ID" value="FN1406"/>
</dbReference>
<dbReference type="GeneID" id="79784377"/>
<dbReference type="KEGG" id="fnu:FN1406"/>
<dbReference type="PATRIC" id="fig|190304.8.peg.1967"/>
<dbReference type="eggNOG" id="COG2986">
    <property type="taxonomic scope" value="Bacteria"/>
</dbReference>
<dbReference type="HOGENOM" id="CLU_014801_4_0_0"/>
<dbReference type="InParanoid" id="Q8RDU4"/>
<dbReference type="BioCyc" id="FNUC190304:G1FZS-1977-MONOMER"/>
<dbReference type="UniPathway" id="UPA00379">
    <property type="reaction ID" value="UER00549"/>
</dbReference>
<dbReference type="Proteomes" id="UP000002521">
    <property type="component" value="Chromosome"/>
</dbReference>
<dbReference type="GO" id="GO:0005737">
    <property type="term" value="C:cytoplasm"/>
    <property type="evidence" value="ECO:0007669"/>
    <property type="project" value="UniProtKB-SubCell"/>
</dbReference>
<dbReference type="GO" id="GO:0004397">
    <property type="term" value="F:histidine ammonia-lyase activity"/>
    <property type="evidence" value="ECO:0000318"/>
    <property type="project" value="GO_Central"/>
</dbReference>
<dbReference type="GO" id="GO:0006548">
    <property type="term" value="P:L-histidine catabolic process"/>
    <property type="evidence" value="ECO:0000318"/>
    <property type="project" value="GO_Central"/>
</dbReference>
<dbReference type="GO" id="GO:0019556">
    <property type="term" value="P:L-histidine catabolic process to glutamate and formamide"/>
    <property type="evidence" value="ECO:0007669"/>
    <property type="project" value="UniProtKB-UniPathway"/>
</dbReference>
<dbReference type="GO" id="GO:0019557">
    <property type="term" value="P:L-histidine catabolic process to glutamate and formate"/>
    <property type="evidence" value="ECO:0007669"/>
    <property type="project" value="UniProtKB-UniPathway"/>
</dbReference>
<dbReference type="CDD" id="cd00332">
    <property type="entry name" value="PAL-HAL"/>
    <property type="match status" value="1"/>
</dbReference>
<dbReference type="FunFam" id="1.10.275.10:FF:000005">
    <property type="entry name" value="Histidine ammonia-lyase"/>
    <property type="match status" value="1"/>
</dbReference>
<dbReference type="FunFam" id="1.20.200.10:FF:000003">
    <property type="entry name" value="Histidine ammonia-lyase"/>
    <property type="match status" value="1"/>
</dbReference>
<dbReference type="Gene3D" id="1.20.200.10">
    <property type="entry name" value="Fumarase/aspartase (Central domain)"/>
    <property type="match status" value="1"/>
</dbReference>
<dbReference type="Gene3D" id="1.10.275.10">
    <property type="entry name" value="Fumarase/aspartase (N-terminal domain)"/>
    <property type="match status" value="1"/>
</dbReference>
<dbReference type="HAMAP" id="MF_00229">
    <property type="entry name" value="His_ammonia_lyase"/>
    <property type="match status" value="1"/>
</dbReference>
<dbReference type="InterPro" id="IPR001106">
    <property type="entry name" value="Aromatic_Lyase"/>
</dbReference>
<dbReference type="InterPro" id="IPR024083">
    <property type="entry name" value="Fumarase/histidase_N"/>
</dbReference>
<dbReference type="InterPro" id="IPR005921">
    <property type="entry name" value="HutH"/>
</dbReference>
<dbReference type="InterPro" id="IPR008948">
    <property type="entry name" value="L-Aspartase-like"/>
</dbReference>
<dbReference type="InterPro" id="IPR022313">
    <property type="entry name" value="Phe/His_NH3-lyase_AS"/>
</dbReference>
<dbReference type="NCBIfam" id="TIGR01225">
    <property type="entry name" value="hutH"/>
    <property type="match status" value="1"/>
</dbReference>
<dbReference type="NCBIfam" id="NF006871">
    <property type="entry name" value="PRK09367.1"/>
    <property type="match status" value="1"/>
</dbReference>
<dbReference type="PANTHER" id="PTHR10362">
    <property type="entry name" value="HISTIDINE AMMONIA-LYASE"/>
    <property type="match status" value="1"/>
</dbReference>
<dbReference type="Pfam" id="PF00221">
    <property type="entry name" value="Lyase_aromatic"/>
    <property type="match status" value="1"/>
</dbReference>
<dbReference type="SUPFAM" id="SSF48557">
    <property type="entry name" value="L-aspartase-like"/>
    <property type="match status" value="1"/>
</dbReference>
<dbReference type="PROSITE" id="PS00488">
    <property type="entry name" value="PAL_HISTIDASE"/>
    <property type="match status" value="1"/>
</dbReference>
<organism>
    <name type="scientific">Fusobacterium nucleatum subsp. nucleatum (strain ATCC 25586 / DSM 15643 / BCRC 10681 / CIP 101130 / JCM 8532 / KCTC 2640 / LMG 13131 / VPI 4355)</name>
    <dbReference type="NCBI Taxonomy" id="190304"/>
    <lineage>
        <taxon>Bacteria</taxon>
        <taxon>Fusobacteriati</taxon>
        <taxon>Fusobacteriota</taxon>
        <taxon>Fusobacteriia</taxon>
        <taxon>Fusobacteriales</taxon>
        <taxon>Fusobacteriaceae</taxon>
        <taxon>Fusobacterium</taxon>
    </lineage>
</organism>
<proteinExistence type="inferred from homology"/>
<evidence type="ECO:0000250" key="1"/>
<evidence type="ECO:0000305" key="2"/>
<name>HUTH2_FUSNN</name>
<keyword id="KW-0963">Cytoplasm</keyword>
<keyword id="KW-0369">Histidine metabolism</keyword>
<keyword id="KW-0456">Lyase</keyword>
<keyword id="KW-1185">Reference proteome</keyword>
<comment type="catalytic activity">
    <reaction>
        <text>L-histidine = trans-urocanate + NH4(+)</text>
        <dbReference type="Rhea" id="RHEA:21232"/>
        <dbReference type="ChEBI" id="CHEBI:17771"/>
        <dbReference type="ChEBI" id="CHEBI:28938"/>
        <dbReference type="ChEBI" id="CHEBI:57595"/>
        <dbReference type="EC" id="4.3.1.3"/>
    </reaction>
</comment>
<comment type="pathway">
    <text>Amino-acid degradation; L-histidine degradation into L-glutamate; N-formimidoyl-L-glutamate from L-histidine: step 1/3.</text>
</comment>
<comment type="subcellular location">
    <subcellularLocation>
        <location evidence="2">Cytoplasm</location>
    </subcellularLocation>
</comment>
<comment type="PTM">
    <text evidence="1">Contains an active site 4-methylidene-imidazol-5-one (MIO), which is formed autocatalytically by cyclization and dehydration of residues Ser-Ser-Gly.</text>
</comment>
<comment type="similarity">
    <text evidence="2">Belongs to the PAL/histidase family.</text>
</comment>
<gene>
    <name type="primary">hutH2</name>
    <name type="ordered locus">FN1406</name>
</gene>
<sequence>MQKIIEINGSNLTIEDVVAVARYGAKVKLDEKQKDKILESRKYVEEALSNKMPIYGINTGFGKFENVPISEEELELLQKNLIYSDACGVGEAFDTEIVRAMMILRANAISKGFSGVMIETVECLLNMLNAGVHPIVRSKGSVGSSGDLCPLAHMVLPMIGEGEAEYKGEILSGKEAMKKAGVSTITLKAKEGLALINGTQAMMGNAVLAVYDAEKLLKQADIVASLSIDALGGIIDAFDERIHLIRPHKGQIYSAENLRKLLKGSKRTTRQGEKRMQDAYSLRCTPQVHGASRLAFDYVKQTVETEINSVTDNPLIFPGENGACISGGNFHGQPIAIAMDTLGILMSEIANISERRIEKLVNPALSHGLPAFLVKNGGINDGFMIPQYVAAALVSENKVLAHPASVDSIPTSANQEDHVSMGTIGARKARTIVDHAQHVVSIELLCAAQAADFWDSKNLGVGTKEAYRTLREKVDFMENDVIFYPLMDKSFEIIKSAILLANVEKIIGLLK</sequence>
<feature type="chain" id="PRO_0000161005" description="Histidine ammonia-lyase 2">
    <location>
        <begin position="1"/>
        <end position="511"/>
    </location>
</feature>
<feature type="modified residue" description="2,3-didehydroalanine (Ser)" evidence="1">
    <location>
        <position position="145"/>
    </location>
</feature>
<feature type="cross-link" description="5-imidazolinone (Ser-Gly)" evidence="1">
    <location>
        <begin position="144"/>
        <end position="146"/>
    </location>
</feature>
<accession>Q8RDU4</accession>
<reference key="1">
    <citation type="journal article" date="2002" name="J. Bacteriol.">
        <title>Genome sequence and analysis of the oral bacterium Fusobacterium nucleatum strain ATCC 25586.</title>
        <authorList>
            <person name="Kapatral V."/>
            <person name="Anderson I."/>
            <person name="Ivanova N."/>
            <person name="Reznik G."/>
            <person name="Los T."/>
            <person name="Lykidis A."/>
            <person name="Bhattacharyya A."/>
            <person name="Bartman A."/>
            <person name="Gardner W."/>
            <person name="Grechkin G."/>
            <person name="Zhu L."/>
            <person name="Vasieva O."/>
            <person name="Chu L."/>
            <person name="Kogan Y."/>
            <person name="Chaga O."/>
            <person name="Goltsman E."/>
            <person name="Bernal A."/>
            <person name="Larsen N."/>
            <person name="D'Souza M."/>
            <person name="Walunas T."/>
            <person name="Pusch G."/>
            <person name="Haselkorn R."/>
            <person name="Fonstein M."/>
            <person name="Kyrpides N.C."/>
            <person name="Overbeek R."/>
        </authorList>
    </citation>
    <scope>NUCLEOTIDE SEQUENCE [LARGE SCALE GENOMIC DNA]</scope>
    <source>
        <strain>ATCC 25586 / DSM 15643 / BCRC 10681 / CIP 101130 / JCM 8532 / KCTC 2640 / LMG 13131 / VPI 4355</strain>
    </source>
</reference>
<protein>
    <recommendedName>
        <fullName>Histidine ammonia-lyase 2</fullName>
        <shortName>Histidase 2</shortName>
        <ecNumber>4.3.1.3</ecNumber>
    </recommendedName>
</protein>